<reference key="1">
    <citation type="journal article" date="1996" name="Plant Mol. Biol.">
        <title>The plant mitochondrial 22 kDa (PSST) subunit of respiratory chain complex I is encoded by a nuclear gene with enhanced transcript levels in flowers.</title>
        <authorList>
            <person name="Heiser V."/>
            <person name="Grohmann L."/>
            <person name="Brennicke A."/>
        </authorList>
    </citation>
    <scope>NUCLEOTIDE SEQUENCE [MRNA]</scope>
    <source>
        <strain>cv. Desiree</strain>
        <tissue>Leaf</tissue>
    </source>
</reference>
<accession>Q43844</accession>
<proteinExistence type="evidence at transcript level"/>
<sequence length="213" mass="23396">MALIARNAKLLTGTAPFLQRAATIHTTLPSLSQQPASSPATSGGAQPPSMNTPAGISKPAEYVISKVDDLMNWARRGSIWPMTFGLACCAVEMMHAGAARYDFDRFGIIFRPSPRQSDVMIVAGTLTNKMAPALRKVYDQMPEPRWVISMGSCANGGGYYHYSYAVVRGCDRIVPVDIYVPGCPPTAEALLYGILQLQKKINRRKDLLMWWTQ</sequence>
<dbReference type="EC" id="7.1.1.2"/>
<dbReference type="EMBL" id="X96671">
    <property type="protein sequence ID" value="CAA65451.1"/>
    <property type="molecule type" value="mRNA"/>
</dbReference>
<dbReference type="PIR" id="T07603">
    <property type="entry name" value="T07603"/>
</dbReference>
<dbReference type="SMR" id="Q43844"/>
<dbReference type="FunCoup" id="Q43844">
    <property type="interactions" value="2102"/>
</dbReference>
<dbReference type="STRING" id="4113.Q43844"/>
<dbReference type="InParanoid" id="Q43844"/>
<dbReference type="Proteomes" id="UP000011115">
    <property type="component" value="Unassembled WGS sequence"/>
</dbReference>
<dbReference type="ExpressionAtlas" id="Q43844">
    <property type="expression patterns" value="baseline"/>
</dbReference>
<dbReference type="GO" id="GO:0005739">
    <property type="term" value="C:mitochondrion"/>
    <property type="evidence" value="ECO:0007669"/>
    <property type="project" value="UniProtKB-SubCell"/>
</dbReference>
<dbReference type="GO" id="GO:0045271">
    <property type="term" value="C:respiratory chain complex I"/>
    <property type="evidence" value="ECO:0000318"/>
    <property type="project" value="GO_Central"/>
</dbReference>
<dbReference type="GO" id="GO:0051539">
    <property type="term" value="F:4 iron, 4 sulfur cluster binding"/>
    <property type="evidence" value="ECO:0007669"/>
    <property type="project" value="UniProtKB-KW"/>
</dbReference>
<dbReference type="GO" id="GO:0046872">
    <property type="term" value="F:metal ion binding"/>
    <property type="evidence" value="ECO:0007669"/>
    <property type="project" value="UniProtKB-KW"/>
</dbReference>
<dbReference type="GO" id="GO:0008137">
    <property type="term" value="F:NADH dehydrogenase (ubiquinone) activity"/>
    <property type="evidence" value="ECO:0000318"/>
    <property type="project" value="GO_Central"/>
</dbReference>
<dbReference type="GO" id="GO:0048038">
    <property type="term" value="F:quinone binding"/>
    <property type="evidence" value="ECO:0007669"/>
    <property type="project" value="InterPro"/>
</dbReference>
<dbReference type="GO" id="GO:0009060">
    <property type="term" value="P:aerobic respiration"/>
    <property type="evidence" value="ECO:0000318"/>
    <property type="project" value="GO_Central"/>
</dbReference>
<dbReference type="GO" id="GO:0015990">
    <property type="term" value="P:electron transport coupled proton transport"/>
    <property type="evidence" value="ECO:0000318"/>
    <property type="project" value="GO_Central"/>
</dbReference>
<dbReference type="GO" id="GO:0032981">
    <property type="term" value="P:mitochondrial respiratory chain complex I assembly"/>
    <property type="evidence" value="ECO:0000318"/>
    <property type="project" value="GO_Central"/>
</dbReference>
<dbReference type="FunFam" id="3.40.50.12280:FF:000001">
    <property type="entry name" value="NADH-quinone oxidoreductase subunit B 2"/>
    <property type="match status" value="1"/>
</dbReference>
<dbReference type="Gene3D" id="3.40.50.12280">
    <property type="match status" value="1"/>
</dbReference>
<dbReference type="HAMAP" id="MF_01356">
    <property type="entry name" value="NDH1_NuoB"/>
    <property type="match status" value="1"/>
</dbReference>
<dbReference type="InterPro" id="IPR006137">
    <property type="entry name" value="NADH_UbQ_OxRdtase-like_20kDa"/>
</dbReference>
<dbReference type="InterPro" id="IPR006138">
    <property type="entry name" value="NADH_UQ_OxRdtase_20Kd_su"/>
</dbReference>
<dbReference type="NCBIfam" id="TIGR01957">
    <property type="entry name" value="nuoB_fam"/>
    <property type="match status" value="1"/>
</dbReference>
<dbReference type="NCBIfam" id="NF005012">
    <property type="entry name" value="PRK06411.1"/>
    <property type="match status" value="1"/>
</dbReference>
<dbReference type="PANTHER" id="PTHR11995">
    <property type="entry name" value="NADH DEHYDROGENASE"/>
    <property type="match status" value="1"/>
</dbReference>
<dbReference type="PANTHER" id="PTHR11995:SF14">
    <property type="entry name" value="NADH DEHYDROGENASE [UBIQUINONE] IRON-SULFUR PROTEIN 7, MITOCHONDRIAL"/>
    <property type="match status" value="1"/>
</dbReference>
<dbReference type="Pfam" id="PF01058">
    <property type="entry name" value="Oxidored_q6"/>
    <property type="match status" value="1"/>
</dbReference>
<dbReference type="SUPFAM" id="SSF56770">
    <property type="entry name" value="HydA/Nqo6-like"/>
    <property type="match status" value="1"/>
</dbReference>
<dbReference type="PROSITE" id="PS01150">
    <property type="entry name" value="COMPLEX1_20K"/>
    <property type="match status" value="1"/>
</dbReference>
<name>NDUS7_SOLTU</name>
<evidence type="ECO:0000250" key="1"/>
<evidence type="ECO:0000255" key="2"/>
<evidence type="ECO:0000256" key="3">
    <source>
        <dbReference type="SAM" id="MobiDB-lite"/>
    </source>
</evidence>
<evidence type="ECO:0000305" key="4"/>
<protein>
    <recommendedName>
        <fullName>NADH dehydrogenase [ubiquinone] iron-sulfur protein 7, mitochondrial</fullName>
        <ecNumber>7.1.1.2</ecNumber>
    </recommendedName>
    <alternativeName>
        <fullName>Complex I-20kD</fullName>
        <shortName>CI-20kD</shortName>
    </alternativeName>
    <alternativeName>
        <fullName>NADH-ubiquinone oxidoreductase 20 kDa subunit</fullName>
    </alternativeName>
</protein>
<comment type="function">
    <text evidence="1">Core subunit of the mitochondrial membrane respiratory chain NADH dehydrogenase (Complex I) that is believed to belong to the minimal assembly required for catalysis. Complex I functions in the transfer of electrons from NADH to the respiratory chain. The immediate electron acceptor for the enzyme is believed to be ubiquinone (By similarity).</text>
</comment>
<comment type="catalytic activity">
    <reaction>
        <text>a ubiquinone + NADH + 5 H(+)(in) = a ubiquinol + NAD(+) + 4 H(+)(out)</text>
        <dbReference type="Rhea" id="RHEA:29091"/>
        <dbReference type="Rhea" id="RHEA-COMP:9565"/>
        <dbReference type="Rhea" id="RHEA-COMP:9566"/>
        <dbReference type="ChEBI" id="CHEBI:15378"/>
        <dbReference type="ChEBI" id="CHEBI:16389"/>
        <dbReference type="ChEBI" id="CHEBI:17976"/>
        <dbReference type="ChEBI" id="CHEBI:57540"/>
        <dbReference type="ChEBI" id="CHEBI:57945"/>
        <dbReference type="EC" id="7.1.1.2"/>
    </reaction>
</comment>
<comment type="cofactor">
    <cofactor evidence="4">
        <name>[4Fe-4S] cluster</name>
        <dbReference type="ChEBI" id="CHEBI:49883"/>
    </cofactor>
    <text evidence="4">Binds 1 [4Fe-4S] cluster.</text>
</comment>
<comment type="subunit">
    <text evidence="1">Complex I is composed of about 45 different subunits. This is a component of the iron-sulfur (IP) fragment of the enzyme (By similarity).</text>
</comment>
<comment type="subcellular location">
    <subcellularLocation>
        <location>Mitochondrion</location>
    </subcellularLocation>
</comment>
<comment type="similarity">
    <text evidence="4">Belongs to the complex I 20 kDa subunit family.</text>
</comment>
<feature type="transit peptide" description="Mitochondrion" evidence="2">
    <location>
        <begin position="1"/>
        <end position="31"/>
    </location>
</feature>
<feature type="chain" id="PRO_0000020035" description="NADH dehydrogenase [ubiquinone] iron-sulfur protein 7, mitochondrial">
    <location>
        <begin position="32"/>
        <end position="213"/>
    </location>
</feature>
<feature type="region of interest" description="Disordered" evidence="3">
    <location>
        <begin position="30"/>
        <end position="52"/>
    </location>
</feature>
<feature type="compositionally biased region" description="Low complexity" evidence="3">
    <location>
        <begin position="30"/>
        <end position="42"/>
    </location>
</feature>
<feature type="binding site" evidence="2">
    <location>
        <position position="88"/>
    </location>
    <ligand>
        <name>[4Fe-4S] cluster</name>
        <dbReference type="ChEBI" id="CHEBI:49883"/>
    </ligand>
</feature>
<feature type="binding site" evidence="2">
    <location>
        <position position="89"/>
    </location>
    <ligand>
        <name>[4Fe-4S] cluster</name>
        <dbReference type="ChEBI" id="CHEBI:49883"/>
    </ligand>
</feature>
<feature type="binding site" evidence="2">
    <location>
        <position position="153"/>
    </location>
    <ligand>
        <name>[4Fe-4S] cluster</name>
        <dbReference type="ChEBI" id="CHEBI:49883"/>
    </ligand>
</feature>
<feature type="binding site" evidence="2">
    <location>
        <position position="183"/>
    </location>
    <ligand>
        <name>[4Fe-4S] cluster</name>
        <dbReference type="ChEBI" id="CHEBI:49883"/>
    </ligand>
</feature>
<keyword id="KW-0004">4Fe-4S</keyword>
<keyword id="KW-0249">Electron transport</keyword>
<keyword id="KW-0408">Iron</keyword>
<keyword id="KW-0411">Iron-sulfur</keyword>
<keyword id="KW-0479">Metal-binding</keyword>
<keyword id="KW-0496">Mitochondrion</keyword>
<keyword id="KW-0520">NAD</keyword>
<keyword id="KW-0560">Oxidoreductase</keyword>
<keyword id="KW-1185">Reference proteome</keyword>
<keyword id="KW-0679">Respiratory chain</keyword>
<keyword id="KW-0809">Transit peptide</keyword>
<keyword id="KW-1278">Translocase</keyword>
<keyword id="KW-0813">Transport</keyword>
<keyword id="KW-0830">Ubiquinone</keyword>
<organism>
    <name type="scientific">Solanum tuberosum</name>
    <name type="common">Potato</name>
    <dbReference type="NCBI Taxonomy" id="4113"/>
    <lineage>
        <taxon>Eukaryota</taxon>
        <taxon>Viridiplantae</taxon>
        <taxon>Streptophyta</taxon>
        <taxon>Embryophyta</taxon>
        <taxon>Tracheophyta</taxon>
        <taxon>Spermatophyta</taxon>
        <taxon>Magnoliopsida</taxon>
        <taxon>eudicotyledons</taxon>
        <taxon>Gunneridae</taxon>
        <taxon>Pentapetalae</taxon>
        <taxon>asterids</taxon>
        <taxon>lamiids</taxon>
        <taxon>Solanales</taxon>
        <taxon>Solanaceae</taxon>
        <taxon>Solanoideae</taxon>
        <taxon>Solaneae</taxon>
        <taxon>Solanum</taxon>
    </lineage>
</organism>